<comment type="similarity">
    <text evidence="1">Belongs to the bacterial ribosomal protein bS16 family.</text>
</comment>
<organism>
    <name type="scientific">Nocardia farcinica (strain IFM 10152)</name>
    <dbReference type="NCBI Taxonomy" id="247156"/>
    <lineage>
        <taxon>Bacteria</taxon>
        <taxon>Bacillati</taxon>
        <taxon>Actinomycetota</taxon>
        <taxon>Actinomycetes</taxon>
        <taxon>Mycobacteriales</taxon>
        <taxon>Nocardiaceae</taxon>
        <taxon>Nocardia</taxon>
    </lineage>
</organism>
<accession>Q5YS35</accession>
<dbReference type="EMBL" id="AP006618">
    <property type="protein sequence ID" value="BAD59006.1"/>
    <property type="molecule type" value="Genomic_DNA"/>
</dbReference>
<dbReference type="RefSeq" id="WP_011210691.1">
    <property type="nucleotide sequence ID" value="NC_006361.1"/>
</dbReference>
<dbReference type="SMR" id="Q5YS35"/>
<dbReference type="STRING" id="247156.NFA_41570"/>
<dbReference type="GeneID" id="61134793"/>
<dbReference type="KEGG" id="nfa:NFA_41570"/>
<dbReference type="eggNOG" id="COG0228">
    <property type="taxonomic scope" value="Bacteria"/>
</dbReference>
<dbReference type="HOGENOM" id="CLU_100590_1_1_11"/>
<dbReference type="OrthoDB" id="9807878at2"/>
<dbReference type="Proteomes" id="UP000006820">
    <property type="component" value="Chromosome"/>
</dbReference>
<dbReference type="GO" id="GO:0005737">
    <property type="term" value="C:cytoplasm"/>
    <property type="evidence" value="ECO:0007669"/>
    <property type="project" value="UniProtKB-ARBA"/>
</dbReference>
<dbReference type="GO" id="GO:0015935">
    <property type="term" value="C:small ribosomal subunit"/>
    <property type="evidence" value="ECO:0007669"/>
    <property type="project" value="TreeGrafter"/>
</dbReference>
<dbReference type="GO" id="GO:0003735">
    <property type="term" value="F:structural constituent of ribosome"/>
    <property type="evidence" value="ECO:0007669"/>
    <property type="project" value="InterPro"/>
</dbReference>
<dbReference type="GO" id="GO:0006412">
    <property type="term" value="P:translation"/>
    <property type="evidence" value="ECO:0007669"/>
    <property type="project" value="UniProtKB-UniRule"/>
</dbReference>
<dbReference type="Gene3D" id="3.30.1320.10">
    <property type="match status" value="1"/>
</dbReference>
<dbReference type="HAMAP" id="MF_00385">
    <property type="entry name" value="Ribosomal_bS16"/>
    <property type="match status" value="1"/>
</dbReference>
<dbReference type="InterPro" id="IPR000307">
    <property type="entry name" value="Ribosomal_bS16"/>
</dbReference>
<dbReference type="InterPro" id="IPR020592">
    <property type="entry name" value="Ribosomal_bS16_CS"/>
</dbReference>
<dbReference type="InterPro" id="IPR023803">
    <property type="entry name" value="Ribosomal_bS16_dom_sf"/>
</dbReference>
<dbReference type="NCBIfam" id="NF011093">
    <property type="entry name" value="PRK14520.1"/>
    <property type="match status" value="1"/>
</dbReference>
<dbReference type="NCBIfam" id="TIGR00002">
    <property type="entry name" value="S16"/>
    <property type="match status" value="1"/>
</dbReference>
<dbReference type="PANTHER" id="PTHR12919">
    <property type="entry name" value="30S RIBOSOMAL PROTEIN S16"/>
    <property type="match status" value="1"/>
</dbReference>
<dbReference type="PANTHER" id="PTHR12919:SF20">
    <property type="entry name" value="SMALL RIBOSOMAL SUBUNIT PROTEIN BS16M"/>
    <property type="match status" value="1"/>
</dbReference>
<dbReference type="Pfam" id="PF00886">
    <property type="entry name" value="Ribosomal_S16"/>
    <property type="match status" value="1"/>
</dbReference>
<dbReference type="SUPFAM" id="SSF54565">
    <property type="entry name" value="Ribosomal protein S16"/>
    <property type="match status" value="1"/>
</dbReference>
<dbReference type="PROSITE" id="PS00732">
    <property type="entry name" value="RIBOSOMAL_S16"/>
    <property type="match status" value="1"/>
</dbReference>
<sequence>MAVRIKLTRLGKIRNPQYRVVVADARTRRDGRAIESIGKYHPKEEPSLIEIDSERVQYWLSVGAQPTEPVQRLLEITGDWQKFKGLPGAEGTLKVKAAKPSKLDLFNAALAAAENEPVAEAVTPKKKAKKDDAAAESTEAEAAE</sequence>
<name>RS16_NOCFA</name>
<reference key="1">
    <citation type="journal article" date="2004" name="Proc. Natl. Acad. Sci. U.S.A.">
        <title>The complete genomic sequence of Nocardia farcinica IFM 10152.</title>
        <authorList>
            <person name="Ishikawa J."/>
            <person name="Yamashita A."/>
            <person name="Mikami Y."/>
            <person name="Hoshino Y."/>
            <person name="Kurita H."/>
            <person name="Hotta K."/>
            <person name="Shiba T."/>
            <person name="Hattori M."/>
        </authorList>
    </citation>
    <scope>NUCLEOTIDE SEQUENCE [LARGE SCALE GENOMIC DNA]</scope>
    <source>
        <strain>IFM 10152</strain>
    </source>
</reference>
<evidence type="ECO:0000255" key="1">
    <source>
        <dbReference type="HAMAP-Rule" id="MF_00385"/>
    </source>
</evidence>
<evidence type="ECO:0000256" key="2">
    <source>
        <dbReference type="SAM" id="MobiDB-lite"/>
    </source>
</evidence>
<evidence type="ECO:0000305" key="3"/>
<feature type="chain" id="PRO_0000243838" description="Small ribosomal subunit protein bS16">
    <location>
        <begin position="1"/>
        <end position="144"/>
    </location>
</feature>
<feature type="region of interest" description="Disordered" evidence="2">
    <location>
        <begin position="115"/>
        <end position="144"/>
    </location>
</feature>
<proteinExistence type="inferred from homology"/>
<gene>
    <name evidence="1" type="primary">rpsP</name>
    <name type="ordered locus">NFA_41570</name>
</gene>
<protein>
    <recommendedName>
        <fullName evidence="1">Small ribosomal subunit protein bS16</fullName>
    </recommendedName>
    <alternativeName>
        <fullName evidence="3">30S ribosomal protein S16</fullName>
    </alternativeName>
</protein>
<keyword id="KW-1185">Reference proteome</keyword>
<keyword id="KW-0687">Ribonucleoprotein</keyword>
<keyword id="KW-0689">Ribosomal protein</keyword>